<reference key="1">
    <citation type="journal article" date="2011" name="J. Bacteriol.">
        <title>Comparative genomics of 28 Salmonella enterica isolates: evidence for CRISPR-mediated adaptive sublineage evolution.</title>
        <authorList>
            <person name="Fricke W.F."/>
            <person name="Mammel M.K."/>
            <person name="McDermott P.F."/>
            <person name="Tartera C."/>
            <person name="White D.G."/>
            <person name="Leclerc J.E."/>
            <person name="Ravel J."/>
            <person name="Cebula T.A."/>
        </authorList>
    </citation>
    <scope>NUCLEOTIDE SEQUENCE [LARGE SCALE GENOMIC DNA]</scope>
    <source>
        <strain>SL483</strain>
    </source>
</reference>
<evidence type="ECO:0000255" key="1">
    <source>
        <dbReference type="HAMAP-Rule" id="MF_00746"/>
    </source>
</evidence>
<protein>
    <recommendedName>
        <fullName evidence="1">Protein SprT</fullName>
    </recommendedName>
</protein>
<comment type="cofactor">
    <cofactor evidence="1">
        <name>Zn(2+)</name>
        <dbReference type="ChEBI" id="CHEBI:29105"/>
    </cofactor>
    <text evidence="1">Binds 1 zinc ion.</text>
</comment>
<comment type="subcellular location">
    <subcellularLocation>
        <location evidence="1">Cytoplasm</location>
    </subcellularLocation>
</comment>
<comment type="similarity">
    <text evidence="1">Belongs to the SprT family.</text>
</comment>
<keyword id="KW-0963">Cytoplasm</keyword>
<keyword id="KW-0479">Metal-binding</keyword>
<keyword id="KW-0862">Zinc</keyword>
<feature type="chain" id="PRO_1000133248" description="Protein SprT">
    <location>
        <begin position="1"/>
        <end position="165"/>
    </location>
</feature>
<feature type="domain" description="SprT-like" evidence="1">
    <location>
        <begin position="22"/>
        <end position="163"/>
    </location>
</feature>
<feature type="active site" evidence="1">
    <location>
        <position position="79"/>
    </location>
</feature>
<feature type="binding site" evidence="1">
    <location>
        <position position="78"/>
    </location>
    <ligand>
        <name>Zn(2+)</name>
        <dbReference type="ChEBI" id="CHEBI:29105"/>
    </ligand>
</feature>
<feature type="binding site" evidence="1">
    <location>
        <position position="82"/>
    </location>
    <ligand>
        <name>Zn(2+)</name>
        <dbReference type="ChEBI" id="CHEBI:29105"/>
    </ligand>
</feature>
<dbReference type="EMBL" id="CP001138">
    <property type="protein sequence ID" value="ACH50927.1"/>
    <property type="molecule type" value="Genomic_DNA"/>
</dbReference>
<dbReference type="RefSeq" id="WP_000856775.1">
    <property type="nucleotide sequence ID" value="NC_011149.1"/>
</dbReference>
<dbReference type="KEGG" id="sea:SeAg_B3255"/>
<dbReference type="HOGENOM" id="CLU_113336_0_1_6"/>
<dbReference type="Proteomes" id="UP000008819">
    <property type="component" value="Chromosome"/>
</dbReference>
<dbReference type="GO" id="GO:0005737">
    <property type="term" value="C:cytoplasm"/>
    <property type="evidence" value="ECO:0007669"/>
    <property type="project" value="UniProtKB-SubCell"/>
</dbReference>
<dbReference type="GO" id="GO:0008270">
    <property type="term" value="F:zinc ion binding"/>
    <property type="evidence" value="ECO:0007669"/>
    <property type="project" value="UniProtKB-UniRule"/>
</dbReference>
<dbReference type="GO" id="GO:0006950">
    <property type="term" value="P:response to stress"/>
    <property type="evidence" value="ECO:0007669"/>
    <property type="project" value="UniProtKB-ARBA"/>
</dbReference>
<dbReference type="HAMAP" id="MF_00746">
    <property type="entry name" value="SprT"/>
    <property type="match status" value="1"/>
</dbReference>
<dbReference type="InterPro" id="IPR006640">
    <property type="entry name" value="SprT-like_domain"/>
</dbReference>
<dbReference type="InterPro" id="IPR035240">
    <property type="entry name" value="SprT_Zn_ribbon"/>
</dbReference>
<dbReference type="InterPro" id="IPR023483">
    <property type="entry name" value="Uncharacterised_SprT"/>
</dbReference>
<dbReference type="NCBIfam" id="NF003421">
    <property type="entry name" value="PRK04860.1"/>
    <property type="match status" value="1"/>
</dbReference>
<dbReference type="PANTHER" id="PTHR38773">
    <property type="entry name" value="PROTEIN SPRT"/>
    <property type="match status" value="1"/>
</dbReference>
<dbReference type="PANTHER" id="PTHR38773:SF1">
    <property type="entry name" value="PROTEIN SPRT"/>
    <property type="match status" value="1"/>
</dbReference>
<dbReference type="Pfam" id="PF10263">
    <property type="entry name" value="SprT-like"/>
    <property type="match status" value="1"/>
</dbReference>
<dbReference type="Pfam" id="PF17283">
    <property type="entry name" value="Zn_ribbon_SprT"/>
    <property type="match status" value="1"/>
</dbReference>
<dbReference type="SMART" id="SM00731">
    <property type="entry name" value="SprT"/>
    <property type="match status" value="1"/>
</dbReference>
<dbReference type="PROSITE" id="PS00142">
    <property type="entry name" value="ZINC_PROTEASE"/>
    <property type="match status" value="1"/>
</dbReference>
<accession>B5F5L7</accession>
<organism>
    <name type="scientific">Salmonella agona (strain SL483)</name>
    <dbReference type="NCBI Taxonomy" id="454166"/>
    <lineage>
        <taxon>Bacteria</taxon>
        <taxon>Pseudomonadati</taxon>
        <taxon>Pseudomonadota</taxon>
        <taxon>Gammaproteobacteria</taxon>
        <taxon>Enterobacterales</taxon>
        <taxon>Enterobacteriaceae</taxon>
        <taxon>Salmonella</taxon>
    </lineage>
</organism>
<name>SPRT_SALA4</name>
<proteinExistence type="inferred from homology"/>
<sequence>MKTPRLPIAIQQAVMRRLRENLAQANLKLDRHYPEPKLVYTQRGTSAGTAWLESYEIRLNPVLLLENIDTFIAEVVPHELAHLLVWKHFGRKAPHGKEWKWMMESVLGVPARRTHQFALQSVRRNTFPYHCQCQQHQLTVRRHNRVVRGEAVYRCVHCGEPLVAG</sequence>
<gene>
    <name evidence="1" type="primary">sprT</name>
    <name type="ordered locus">SeAg_B3255</name>
</gene>